<organism>
    <name type="scientific">Escherichia fergusonii (strain ATCC 35469 / DSM 13698 / CCUG 18766 / IAM 14443 / JCM 21226 / LMG 7866 / NBRC 102419 / NCTC 12128 / CDC 0568-73)</name>
    <dbReference type="NCBI Taxonomy" id="585054"/>
    <lineage>
        <taxon>Bacteria</taxon>
        <taxon>Pseudomonadati</taxon>
        <taxon>Pseudomonadota</taxon>
        <taxon>Gammaproteobacteria</taxon>
        <taxon>Enterobacterales</taxon>
        <taxon>Enterobacteriaceae</taxon>
        <taxon>Escherichia</taxon>
    </lineage>
</organism>
<gene>
    <name evidence="1" type="primary">glyQ</name>
    <name type="ordered locus">EFER_3561</name>
</gene>
<protein>
    <recommendedName>
        <fullName evidence="1">Glycine--tRNA ligase alpha subunit</fullName>
        <ecNumber evidence="1">6.1.1.14</ecNumber>
    </recommendedName>
    <alternativeName>
        <fullName evidence="1">Glycyl-tRNA synthetase alpha subunit</fullName>
        <shortName evidence="1">GlyRS</shortName>
    </alternativeName>
</protein>
<comment type="catalytic activity">
    <reaction evidence="1">
        <text>tRNA(Gly) + glycine + ATP = glycyl-tRNA(Gly) + AMP + diphosphate</text>
        <dbReference type="Rhea" id="RHEA:16013"/>
        <dbReference type="Rhea" id="RHEA-COMP:9664"/>
        <dbReference type="Rhea" id="RHEA-COMP:9683"/>
        <dbReference type="ChEBI" id="CHEBI:30616"/>
        <dbReference type="ChEBI" id="CHEBI:33019"/>
        <dbReference type="ChEBI" id="CHEBI:57305"/>
        <dbReference type="ChEBI" id="CHEBI:78442"/>
        <dbReference type="ChEBI" id="CHEBI:78522"/>
        <dbReference type="ChEBI" id="CHEBI:456215"/>
        <dbReference type="EC" id="6.1.1.14"/>
    </reaction>
</comment>
<comment type="subunit">
    <text evidence="1">Tetramer of two alpha and two beta subunits.</text>
</comment>
<comment type="subcellular location">
    <subcellularLocation>
        <location evidence="1">Cytoplasm</location>
    </subcellularLocation>
</comment>
<comment type="similarity">
    <text evidence="1">Belongs to the class-II aminoacyl-tRNA synthetase family.</text>
</comment>
<accession>B7LTH4</accession>
<name>SYGA_ESCF3</name>
<evidence type="ECO:0000255" key="1">
    <source>
        <dbReference type="HAMAP-Rule" id="MF_00254"/>
    </source>
</evidence>
<dbReference type="EC" id="6.1.1.14" evidence="1"/>
<dbReference type="EMBL" id="CU928158">
    <property type="protein sequence ID" value="CAQ91033.1"/>
    <property type="molecule type" value="Genomic_DNA"/>
</dbReference>
<dbReference type="RefSeq" id="WP_001168544.1">
    <property type="nucleotide sequence ID" value="NC_011740.1"/>
</dbReference>
<dbReference type="SMR" id="B7LTH4"/>
<dbReference type="GeneID" id="93778290"/>
<dbReference type="KEGG" id="efe:EFER_3561"/>
<dbReference type="HOGENOM" id="CLU_057066_1_0_6"/>
<dbReference type="OrthoDB" id="9802183at2"/>
<dbReference type="Proteomes" id="UP000000745">
    <property type="component" value="Chromosome"/>
</dbReference>
<dbReference type="GO" id="GO:0005829">
    <property type="term" value="C:cytosol"/>
    <property type="evidence" value="ECO:0007669"/>
    <property type="project" value="TreeGrafter"/>
</dbReference>
<dbReference type="GO" id="GO:0005524">
    <property type="term" value="F:ATP binding"/>
    <property type="evidence" value="ECO:0007669"/>
    <property type="project" value="UniProtKB-UniRule"/>
</dbReference>
<dbReference type="GO" id="GO:0004820">
    <property type="term" value="F:glycine-tRNA ligase activity"/>
    <property type="evidence" value="ECO:0007669"/>
    <property type="project" value="UniProtKB-UniRule"/>
</dbReference>
<dbReference type="GO" id="GO:0006426">
    <property type="term" value="P:glycyl-tRNA aminoacylation"/>
    <property type="evidence" value="ECO:0007669"/>
    <property type="project" value="UniProtKB-UniRule"/>
</dbReference>
<dbReference type="CDD" id="cd00733">
    <property type="entry name" value="GlyRS_alpha_core"/>
    <property type="match status" value="1"/>
</dbReference>
<dbReference type="FunFam" id="1.20.58.180:FF:000001">
    <property type="entry name" value="Glycine--tRNA ligase alpha subunit"/>
    <property type="match status" value="1"/>
</dbReference>
<dbReference type="FunFam" id="3.30.930.10:FF:000006">
    <property type="entry name" value="Glycine--tRNA ligase alpha subunit"/>
    <property type="match status" value="1"/>
</dbReference>
<dbReference type="Gene3D" id="3.30.930.10">
    <property type="entry name" value="Bira Bifunctional Protein, Domain 2"/>
    <property type="match status" value="1"/>
</dbReference>
<dbReference type="Gene3D" id="1.20.58.180">
    <property type="entry name" value="Class II aaRS and biotin synthetases, domain 2"/>
    <property type="match status" value="1"/>
</dbReference>
<dbReference type="HAMAP" id="MF_00254">
    <property type="entry name" value="Gly_tRNA_synth_alpha"/>
    <property type="match status" value="1"/>
</dbReference>
<dbReference type="InterPro" id="IPR045864">
    <property type="entry name" value="aa-tRNA-synth_II/BPL/LPL"/>
</dbReference>
<dbReference type="InterPro" id="IPR006194">
    <property type="entry name" value="Gly-tRNA-synth_heterodimer"/>
</dbReference>
<dbReference type="InterPro" id="IPR002310">
    <property type="entry name" value="Gly-tRNA_ligase_asu"/>
</dbReference>
<dbReference type="NCBIfam" id="TIGR00388">
    <property type="entry name" value="glyQ"/>
    <property type="match status" value="1"/>
</dbReference>
<dbReference type="NCBIfam" id="NF006827">
    <property type="entry name" value="PRK09348.1"/>
    <property type="match status" value="1"/>
</dbReference>
<dbReference type="PANTHER" id="PTHR30075:SF2">
    <property type="entry name" value="GLYCINE--TRNA LIGASE, CHLOROPLASTIC_MITOCHONDRIAL 2"/>
    <property type="match status" value="1"/>
</dbReference>
<dbReference type="PANTHER" id="PTHR30075">
    <property type="entry name" value="GLYCYL-TRNA SYNTHETASE"/>
    <property type="match status" value="1"/>
</dbReference>
<dbReference type="Pfam" id="PF02091">
    <property type="entry name" value="tRNA-synt_2e"/>
    <property type="match status" value="1"/>
</dbReference>
<dbReference type="PRINTS" id="PR01044">
    <property type="entry name" value="TRNASYNTHGA"/>
</dbReference>
<dbReference type="SUPFAM" id="SSF55681">
    <property type="entry name" value="Class II aaRS and biotin synthetases"/>
    <property type="match status" value="1"/>
</dbReference>
<dbReference type="PROSITE" id="PS50861">
    <property type="entry name" value="AA_TRNA_LIGASE_II_GLYAB"/>
    <property type="match status" value="1"/>
</dbReference>
<sequence>MQKFDTRTFQGLILTLQDYWARQGCTIVQPLDMEVGAGTSHPMTCLRALGPEPMAAAYVQPSRRPTDGRYGENPNRLQHYYQFQVVIKPSPDNIQELYLGSLKELGMDPTIHDIRFVEDNWENPTLGAWGLGWEVWLNGMEVTQFTYFQQVGGLECKPVTGEITYGLERLAMYIQGVDSVYDLVWSDGPLGKTTYGDVFHQNEVEQSTYNFEYADVDFLFTCFEQYEKEAQQLLALENPLPLPAYERILKAAHSFNLLDARKAISVTERQRYILRIRTLTKAVAEAYYASREALGFPMCNKDK</sequence>
<proteinExistence type="inferred from homology"/>
<keyword id="KW-0030">Aminoacyl-tRNA synthetase</keyword>
<keyword id="KW-0067">ATP-binding</keyword>
<keyword id="KW-0963">Cytoplasm</keyword>
<keyword id="KW-0436">Ligase</keyword>
<keyword id="KW-0547">Nucleotide-binding</keyword>
<keyword id="KW-0648">Protein biosynthesis</keyword>
<feature type="chain" id="PRO_1000197199" description="Glycine--tRNA ligase alpha subunit">
    <location>
        <begin position="1"/>
        <end position="303"/>
    </location>
</feature>
<reference key="1">
    <citation type="journal article" date="2009" name="PLoS Genet.">
        <title>Organised genome dynamics in the Escherichia coli species results in highly diverse adaptive paths.</title>
        <authorList>
            <person name="Touchon M."/>
            <person name="Hoede C."/>
            <person name="Tenaillon O."/>
            <person name="Barbe V."/>
            <person name="Baeriswyl S."/>
            <person name="Bidet P."/>
            <person name="Bingen E."/>
            <person name="Bonacorsi S."/>
            <person name="Bouchier C."/>
            <person name="Bouvet O."/>
            <person name="Calteau A."/>
            <person name="Chiapello H."/>
            <person name="Clermont O."/>
            <person name="Cruveiller S."/>
            <person name="Danchin A."/>
            <person name="Diard M."/>
            <person name="Dossat C."/>
            <person name="Karoui M.E."/>
            <person name="Frapy E."/>
            <person name="Garry L."/>
            <person name="Ghigo J.M."/>
            <person name="Gilles A.M."/>
            <person name="Johnson J."/>
            <person name="Le Bouguenec C."/>
            <person name="Lescat M."/>
            <person name="Mangenot S."/>
            <person name="Martinez-Jehanne V."/>
            <person name="Matic I."/>
            <person name="Nassif X."/>
            <person name="Oztas S."/>
            <person name="Petit M.A."/>
            <person name="Pichon C."/>
            <person name="Rouy Z."/>
            <person name="Ruf C.S."/>
            <person name="Schneider D."/>
            <person name="Tourret J."/>
            <person name="Vacherie B."/>
            <person name="Vallenet D."/>
            <person name="Medigue C."/>
            <person name="Rocha E.P.C."/>
            <person name="Denamur E."/>
        </authorList>
    </citation>
    <scope>NUCLEOTIDE SEQUENCE [LARGE SCALE GENOMIC DNA]</scope>
    <source>
        <strain>ATCC 35469 / DSM 13698 / BCRC 15582 / CCUG 18766 / IAM 14443 / JCM 21226 / LMG 7866 / NBRC 102419 / NCTC 12128 / CDC 0568-73</strain>
    </source>
</reference>